<protein>
    <recommendedName>
        <fullName evidence="2">Chaperonin GroEL 1</fullName>
        <ecNumber evidence="2">5.6.1.7</ecNumber>
    </recommendedName>
    <alternativeName>
        <fullName evidence="2">60 kDa chaperonin 1</fullName>
    </alternativeName>
    <alternativeName>
        <fullName evidence="2">Chaperonin-60 1</fullName>
        <shortName evidence="2">Cpn60 1</shortName>
    </alternativeName>
    <alternativeName>
        <fullName>HSP58</fullName>
    </alternativeName>
</protein>
<keyword id="KW-0067">ATP-binding</keyword>
<keyword id="KW-0143">Chaperone</keyword>
<keyword id="KW-0963">Cytoplasm</keyword>
<keyword id="KW-0413">Isomerase</keyword>
<keyword id="KW-0547">Nucleotide-binding</keyword>
<keyword id="KW-1185">Reference proteome</keyword>
<name>CH601_STRCO</name>
<feature type="initiator methionine" description="Removed" evidence="1">
    <location>
        <position position="1"/>
    </location>
</feature>
<feature type="chain" id="PRO_0000063549" description="Chaperonin GroEL 1">
    <location>
        <begin position="2"/>
        <end position="541"/>
    </location>
</feature>
<feature type="binding site" evidence="2">
    <location>
        <begin position="29"/>
        <end position="32"/>
    </location>
    <ligand>
        <name>ATP</name>
        <dbReference type="ChEBI" id="CHEBI:30616"/>
    </ligand>
</feature>
<feature type="binding site" evidence="2">
    <location>
        <begin position="86"/>
        <end position="90"/>
    </location>
    <ligand>
        <name>ATP</name>
        <dbReference type="ChEBI" id="CHEBI:30616"/>
    </ligand>
</feature>
<feature type="binding site" evidence="2">
    <location>
        <position position="415"/>
    </location>
    <ligand>
        <name>ATP</name>
        <dbReference type="ChEBI" id="CHEBI:30616"/>
    </ligand>
</feature>
<feature type="binding site" evidence="2">
    <location>
        <begin position="479"/>
        <end position="481"/>
    </location>
    <ligand>
        <name>ATP</name>
        <dbReference type="ChEBI" id="CHEBI:30616"/>
    </ligand>
</feature>
<feature type="binding site" evidence="2">
    <location>
        <position position="495"/>
    </location>
    <ligand>
        <name>ATP</name>
        <dbReference type="ChEBI" id="CHEBI:30616"/>
    </ligand>
</feature>
<feature type="sequence conflict" description="In Ref. 1; CAA53019." evidence="3" ref="1">
    <original>GR</original>
    <variation>A</variation>
    <location>
        <begin position="34"/>
        <end position="35"/>
    </location>
</feature>
<dbReference type="EC" id="5.6.1.7" evidence="2"/>
<dbReference type="EMBL" id="X75206">
    <property type="protein sequence ID" value="CAA53019.1"/>
    <property type="molecule type" value="Genomic_DNA"/>
</dbReference>
<dbReference type="EMBL" id="AL939121">
    <property type="protein sequence ID" value="CAA20418.1"/>
    <property type="molecule type" value="Genomic_DNA"/>
</dbReference>
<dbReference type="PIR" id="S37566">
    <property type="entry name" value="S37566"/>
</dbReference>
<dbReference type="PIR" id="T35591">
    <property type="entry name" value="T35591"/>
</dbReference>
<dbReference type="RefSeq" id="NP_628920.1">
    <property type="nucleotide sequence ID" value="NC_003888.3"/>
</dbReference>
<dbReference type="SMR" id="P40171"/>
<dbReference type="STRING" id="100226.gene:17762411"/>
<dbReference type="PaxDb" id="100226-SCO4762"/>
<dbReference type="KEGG" id="sco:SCO4762"/>
<dbReference type="PATRIC" id="fig|100226.15.peg.4834"/>
<dbReference type="eggNOG" id="COG0459">
    <property type="taxonomic scope" value="Bacteria"/>
</dbReference>
<dbReference type="HOGENOM" id="CLU_016503_3_0_11"/>
<dbReference type="InParanoid" id="P40171"/>
<dbReference type="OrthoDB" id="9766614at2"/>
<dbReference type="PhylomeDB" id="P40171"/>
<dbReference type="Proteomes" id="UP000001973">
    <property type="component" value="Chromosome"/>
</dbReference>
<dbReference type="GO" id="GO:1990220">
    <property type="term" value="C:GroEL-GroES complex"/>
    <property type="evidence" value="ECO:0000318"/>
    <property type="project" value="GO_Central"/>
</dbReference>
<dbReference type="GO" id="GO:0005524">
    <property type="term" value="F:ATP binding"/>
    <property type="evidence" value="ECO:0000318"/>
    <property type="project" value="GO_Central"/>
</dbReference>
<dbReference type="GO" id="GO:0140662">
    <property type="term" value="F:ATP-dependent protein folding chaperone"/>
    <property type="evidence" value="ECO:0007669"/>
    <property type="project" value="InterPro"/>
</dbReference>
<dbReference type="GO" id="GO:0016853">
    <property type="term" value="F:isomerase activity"/>
    <property type="evidence" value="ECO:0007669"/>
    <property type="project" value="UniProtKB-KW"/>
</dbReference>
<dbReference type="GO" id="GO:0051082">
    <property type="term" value="F:unfolded protein binding"/>
    <property type="evidence" value="ECO:0000318"/>
    <property type="project" value="GO_Central"/>
</dbReference>
<dbReference type="GO" id="GO:0051085">
    <property type="term" value="P:chaperone cofactor-dependent protein refolding"/>
    <property type="evidence" value="ECO:0000318"/>
    <property type="project" value="GO_Central"/>
</dbReference>
<dbReference type="GO" id="GO:0042026">
    <property type="term" value="P:protein refolding"/>
    <property type="evidence" value="ECO:0007669"/>
    <property type="project" value="UniProtKB-UniRule"/>
</dbReference>
<dbReference type="GO" id="GO:0009408">
    <property type="term" value="P:response to heat"/>
    <property type="evidence" value="ECO:0000318"/>
    <property type="project" value="GO_Central"/>
</dbReference>
<dbReference type="CDD" id="cd03344">
    <property type="entry name" value="GroEL"/>
    <property type="match status" value="1"/>
</dbReference>
<dbReference type="FunFam" id="3.50.7.10:FF:000001">
    <property type="entry name" value="60 kDa chaperonin"/>
    <property type="match status" value="1"/>
</dbReference>
<dbReference type="Gene3D" id="3.50.7.10">
    <property type="entry name" value="GroEL"/>
    <property type="match status" value="1"/>
</dbReference>
<dbReference type="Gene3D" id="1.10.560.10">
    <property type="entry name" value="GroEL-like equatorial domain"/>
    <property type="match status" value="1"/>
</dbReference>
<dbReference type="Gene3D" id="3.30.260.10">
    <property type="entry name" value="TCP-1-like chaperonin intermediate domain"/>
    <property type="match status" value="1"/>
</dbReference>
<dbReference type="HAMAP" id="MF_00600">
    <property type="entry name" value="CH60"/>
    <property type="match status" value="1"/>
</dbReference>
<dbReference type="InterPro" id="IPR018370">
    <property type="entry name" value="Chaperonin_Cpn60_CS"/>
</dbReference>
<dbReference type="InterPro" id="IPR001844">
    <property type="entry name" value="Cpn60/GroEL"/>
</dbReference>
<dbReference type="InterPro" id="IPR002423">
    <property type="entry name" value="Cpn60/GroEL/TCP-1"/>
</dbReference>
<dbReference type="InterPro" id="IPR027409">
    <property type="entry name" value="GroEL-like_apical_dom_sf"/>
</dbReference>
<dbReference type="InterPro" id="IPR027413">
    <property type="entry name" value="GROEL-like_equatorial_sf"/>
</dbReference>
<dbReference type="InterPro" id="IPR027410">
    <property type="entry name" value="TCP-1-like_intermed_sf"/>
</dbReference>
<dbReference type="NCBIfam" id="TIGR02348">
    <property type="entry name" value="GroEL"/>
    <property type="match status" value="1"/>
</dbReference>
<dbReference type="NCBIfam" id="NF000592">
    <property type="entry name" value="PRK00013.1"/>
    <property type="match status" value="1"/>
</dbReference>
<dbReference type="NCBIfam" id="NF009487">
    <property type="entry name" value="PRK12849.1"/>
    <property type="match status" value="1"/>
</dbReference>
<dbReference type="NCBIfam" id="NF009488">
    <property type="entry name" value="PRK12850.1"/>
    <property type="match status" value="1"/>
</dbReference>
<dbReference type="NCBIfam" id="NF009489">
    <property type="entry name" value="PRK12851.1"/>
    <property type="match status" value="1"/>
</dbReference>
<dbReference type="PANTHER" id="PTHR45633">
    <property type="entry name" value="60 KDA HEAT SHOCK PROTEIN, MITOCHONDRIAL"/>
    <property type="match status" value="1"/>
</dbReference>
<dbReference type="Pfam" id="PF00118">
    <property type="entry name" value="Cpn60_TCP1"/>
    <property type="match status" value="1"/>
</dbReference>
<dbReference type="PRINTS" id="PR00298">
    <property type="entry name" value="CHAPERONIN60"/>
</dbReference>
<dbReference type="SUPFAM" id="SSF52029">
    <property type="entry name" value="GroEL apical domain-like"/>
    <property type="match status" value="1"/>
</dbReference>
<dbReference type="SUPFAM" id="SSF48592">
    <property type="entry name" value="GroEL equatorial domain-like"/>
    <property type="match status" value="1"/>
</dbReference>
<dbReference type="SUPFAM" id="SSF54849">
    <property type="entry name" value="GroEL-intermediate domain like"/>
    <property type="match status" value="1"/>
</dbReference>
<dbReference type="PROSITE" id="PS00296">
    <property type="entry name" value="CHAPERONINS_CPN60"/>
    <property type="match status" value="1"/>
</dbReference>
<organism>
    <name type="scientific">Streptomyces coelicolor (strain ATCC BAA-471 / A3(2) / M145)</name>
    <dbReference type="NCBI Taxonomy" id="100226"/>
    <lineage>
        <taxon>Bacteria</taxon>
        <taxon>Bacillati</taxon>
        <taxon>Actinomycetota</taxon>
        <taxon>Actinomycetes</taxon>
        <taxon>Kitasatosporales</taxon>
        <taxon>Streptomycetaceae</taxon>
        <taxon>Streptomyces</taxon>
        <taxon>Streptomyces albidoflavus group</taxon>
    </lineage>
</organism>
<sequence>MAKILKFDEDARRALERGVNKLADTVKVTIGPKGRNVVIDKKFGAPTITNDGVTIAREVEVEDPYENLGAQLVKEVATKTNDIAGDGTTTATVLAQALVREGLKNVAAGASPALLKKGIDAAVAAVSEDLLATARPIDEKSDIAAVAALSAQDQQVGELIAEAMDKVGKDGVITVEESNTFGLELDFTEGMAFDKGYLSPYFVTDQERMEAVLDDPYILINQGKISSIADLLPLLEKVIQANASKPLLIIAEDLEGEALSTLVVNKIRGTFNAVAVKAPGFGDRRKAMLQDMAVLTGATVISEEVGLKLDQVGLEVLGTARRITVTKDDTTIVDGAGKRDEVQGRIAQIKAEIENTDSDWDREKLQERLAKLAGGVCVIKVGAATEVELKERKHRLEDAISATRAAVEEGIVSGGGSALVHAVKVLEGNLGKTGDEATGVAVVRRAAVEPLRWIAENAGLEGYVITSKVADLDKGQGFNAATGEYGDLVKAGVIDPVKVTRSALENAASIASLLLTTETLVVEKKEEEEPAAGGHSHGHSH</sequence>
<gene>
    <name evidence="2" type="primary">groEL1</name>
    <name evidence="2" type="synonym">groL1</name>
    <name type="ordered locus">SCO4762</name>
    <name type="ORF">SC6G4.40</name>
</gene>
<accession>P40171</accession>
<accession>O86801</accession>
<proteinExistence type="inferred from homology"/>
<evidence type="ECO:0000250" key="1"/>
<evidence type="ECO:0000255" key="2">
    <source>
        <dbReference type="HAMAP-Rule" id="MF_00600"/>
    </source>
</evidence>
<evidence type="ECO:0000305" key="3"/>
<reference key="1">
    <citation type="journal article" date="1994" name="Gene">
        <title>Characterization of two groEL genes in Streptomyces coelicolor A3(2).</title>
        <authorList>
            <person name="Duchene A.M."/>
            <person name="Kieser H.M."/>
            <person name="Hopwood D.A."/>
            <person name="Thompson C.J."/>
            <person name="Mazodier P."/>
        </authorList>
    </citation>
    <scope>NUCLEOTIDE SEQUENCE [GENOMIC DNA]</scope>
    <source>
        <strain>A3(2) / J1501</strain>
    </source>
</reference>
<reference key="2">
    <citation type="journal article" date="2002" name="Nature">
        <title>Complete genome sequence of the model actinomycete Streptomyces coelicolor A3(2).</title>
        <authorList>
            <person name="Bentley S.D."/>
            <person name="Chater K.F."/>
            <person name="Cerdeno-Tarraga A.-M."/>
            <person name="Challis G.L."/>
            <person name="Thomson N.R."/>
            <person name="James K.D."/>
            <person name="Harris D.E."/>
            <person name="Quail M.A."/>
            <person name="Kieser H."/>
            <person name="Harper D."/>
            <person name="Bateman A."/>
            <person name="Brown S."/>
            <person name="Chandra G."/>
            <person name="Chen C.W."/>
            <person name="Collins M."/>
            <person name="Cronin A."/>
            <person name="Fraser A."/>
            <person name="Goble A."/>
            <person name="Hidalgo J."/>
            <person name="Hornsby T."/>
            <person name="Howarth S."/>
            <person name="Huang C.-H."/>
            <person name="Kieser T."/>
            <person name="Larke L."/>
            <person name="Murphy L.D."/>
            <person name="Oliver K."/>
            <person name="O'Neil S."/>
            <person name="Rabbinowitsch E."/>
            <person name="Rajandream M.A."/>
            <person name="Rutherford K.M."/>
            <person name="Rutter S."/>
            <person name="Seeger K."/>
            <person name="Saunders D."/>
            <person name="Sharp S."/>
            <person name="Squares R."/>
            <person name="Squares S."/>
            <person name="Taylor K."/>
            <person name="Warren T."/>
            <person name="Wietzorrek A."/>
            <person name="Woodward J.R."/>
            <person name="Barrell B.G."/>
            <person name="Parkhill J."/>
            <person name="Hopwood D.A."/>
        </authorList>
    </citation>
    <scope>NUCLEOTIDE SEQUENCE [LARGE SCALE GENOMIC DNA]</scope>
    <source>
        <strain>ATCC BAA-471 / A3(2) / M145</strain>
    </source>
</reference>
<comment type="function">
    <text evidence="2">Together with its co-chaperonin GroES, plays an essential role in assisting protein folding. The GroEL-GroES system forms a nano-cage that allows encapsulation of the non-native substrate proteins and provides a physical environment optimized to promote and accelerate protein folding.</text>
</comment>
<comment type="catalytic activity">
    <reaction evidence="2">
        <text>ATP + H2O + a folded polypeptide = ADP + phosphate + an unfolded polypeptide.</text>
        <dbReference type="EC" id="5.6.1.7"/>
    </reaction>
</comment>
<comment type="subunit">
    <text evidence="2">Forms a cylinder of 14 subunits composed of two heptameric rings stacked back-to-back. Interacts with the co-chaperonin GroES.</text>
</comment>
<comment type="subcellular location">
    <subcellularLocation>
        <location evidence="2">Cytoplasm</location>
    </subcellularLocation>
</comment>
<comment type="similarity">
    <text evidence="2">Belongs to the chaperonin (HSP60) family.</text>
</comment>